<sequence length="224" mass="23917">MKMDVKICGLKTAEAVEHAVSLGASHTGFIFFPKSPRNIEPDDAGRLAERIRGRAKIVAVTVDADNDDLDEIVSALKPDILQLHGGEDPERVLTVKAIYGLPVMKALSIREASDLDRIDPYLGIVDRFLFDAKPPAGSELPGGNGVSFDWRLLDALDGSVDYMLSGGLNAENIGEALALTGARAVDTSSGVESAPGVKDLKLMDAFFDAVRRAEAVRPRSGSKT</sequence>
<protein>
    <recommendedName>
        <fullName evidence="1">N-(5'-phosphoribosyl)anthranilate isomerase</fullName>
        <shortName evidence="1">PRAI</shortName>
        <ecNumber evidence="1">5.3.1.24</ecNumber>
    </recommendedName>
</protein>
<name>TRPF_SINFN</name>
<gene>
    <name evidence="1" type="primary">trpF</name>
    <name type="ordered locus">NGR_c33770</name>
</gene>
<feature type="chain" id="PRO_1000197117" description="N-(5'-phosphoribosyl)anthranilate isomerase">
    <location>
        <begin position="1"/>
        <end position="224"/>
    </location>
</feature>
<keyword id="KW-0028">Amino-acid biosynthesis</keyword>
<keyword id="KW-0057">Aromatic amino acid biosynthesis</keyword>
<keyword id="KW-0413">Isomerase</keyword>
<keyword id="KW-1185">Reference proteome</keyword>
<keyword id="KW-0822">Tryptophan biosynthesis</keyword>
<evidence type="ECO:0000255" key="1">
    <source>
        <dbReference type="HAMAP-Rule" id="MF_00135"/>
    </source>
</evidence>
<reference key="1">
    <citation type="journal article" date="2009" name="Appl. Environ. Microbiol.">
        <title>Rhizobium sp. strain NGR234 possesses a remarkable number of secretion systems.</title>
        <authorList>
            <person name="Schmeisser C."/>
            <person name="Liesegang H."/>
            <person name="Krysciak D."/>
            <person name="Bakkou N."/>
            <person name="Le Quere A."/>
            <person name="Wollherr A."/>
            <person name="Heinemeyer I."/>
            <person name="Morgenstern B."/>
            <person name="Pommerening-Roeser A."/>
            <person name="Flores M."/>
            <person name="Palacios R."/>
            <person name="Brenner S."/>
            <person name="Gottschalk G."/>
            <person name="Schmitz R.A."/>
            <person name="Broughton W.J."/>
            <person name="Perret X."/>
            <person name="Strittmatter A.W."/>
            <person name="Streit W.R."/>
        </authorList>
    </citation>
    <scope>NUCLEOTIDE SEQUENCE [LARGE SCALE GENOMIC DNA]</scope>
    <source>
        <strain>NBRC 101917 / NGR234</strain>
    </source>
</reference>
<dbReference type="EC" id="5.3.1.24" evidence="1"/>
<dbReference type="EMBL" id="CP001389">
    <property type="protein sequence ID" value="ACP27107.1"/>
    <property type="molecule type" value="Genomic_DNA"/>
</dbReference>
<dbReference type="RefSeq" id="WP_012709854.1">
    <property type="nucleotide sequence ID" value="NC_012587.1"/>
</dbReference>
<dbReference type="RefSeq" id="YP_002827860.1">
    <property type="nucleotide sequence ID" value="NC_012587.1"/>
</dbReference>
<dbReference type="SMR" id="C3MB98"/>
<dbReference type="STRING" id="394.NGR_c33770"/>
<dbReference type="KEGG" id="rhi:NGR_c33770"/>
<dbReference type="PATRIC" id="fig|394.7.peg.6225"/>
<dbReference type="eggNOG" id="COG0135">
    <property type="taxonomic scope" value="Bacteria"/>
</dbReference>
<dbReference type="HOGENOM" id="CLU_076364_1_1_5"/>
<dbReference type="OrthoDB" id="9796196at2"/>
<dbReference type="UniPathway" id="UPA00035">
    <property type="reaction ID" value="UER00042"/>
</dbReference>
<dbReference type="Proteomes" id="UP000001054">
    <property type="component" value="Chromosome"/>
</dbReference>
<dbReference type="GO" id="GO:0004640">
    <property type="term" value="F:phosphoribosylanthranilate isomerase activity"/>
    <property type="evidence" value="ECO:0007669"/>
    <property type="project" value="UniProtKB-UniRule"/>
</dbReference>
<dbReference type="GO" id="GO:0000162">
    <property type="term" value="P:L-tryptophan biosynthetic process"/>
    <property type="evidence" value="ECO:0007669"/>
    <property type="project" value="UniProtKB-UniRule"/>
</dbReference>
<dbReference type="CDD" id="cd00405">
    <property type="entry name" value="PRAI"/>
    <property type="match status" value="1"/>
</dbReference>
<dbReference type="Gene3D" id="3.20.20.70">
    <property type="entry name" value="Aldolase class I"/>
    <property type="match status" value="1"/>
</dbReference>
<dbReference type="HAMAP" id="MF_00135">
    <property type="entry name" value="PRAI"/>
    <property type="match status" value="1"/>
</dbReference>
<dbReference type="InterPro" id="IPR013785">
    <property type="entry name" value="Aldolase_TIM"/>
</dbReference>
<dbReference type="InterPro" id="IPR001240">
    <property type="entry name" value="PRAI_dom"/>
</dbReference>
<dbReference type="InterPro" id="IPR011060">
    <property type="entry name" value="RibuloseP-bd_barrel"/>
</dbReference>
<dbReference type="InterPro" id="IPR044643">
    <property type="entry name" value="TrpF_fam"/>
</dbReference>
<dbReference type="NCBIfam" id="NF002295">
    <property type="entry name" value="PRK01222.1-1"/>
    <property type="match status" value="1"/>
</dbReference>
<dbReference type="PANTHER" id="PTHR42894">
    <property type="entry name" value="N-(5'-PHOSPHORIBOSYL)ANTHRANILATE ISOMERASE"/>
    <property type="match status" value="1"/>
</dbReference>
<dbReference type="PANTHER" id="PTHR42894:SF1">
    <property type="entry name" value="N-(5'-PHOSPHORIBOSYL)ANTHRANILATE ISOMERASE"/>
    <property type="match status" value="1"/>
</dbReference>
<dbReference type="Pfam" id="PF00697">
    <property type="entry name" value="PRAI"/>
    <property type="match status" value="1"/>
</dbReference>
<dbReference type="SUPFAM" id="SSF51366">
    <property type="entry name" value="Ribulose-phoshate binding barrel"/>
    <property type="match status" value="1"/>
</dbReference>
<comment type="catalytic activity">
    <reaction evidence="1">
        <text>N-(5-phospho-beta-D-ribosyl)anthranilate = 1-(2-carboxyphenylamino)-1-deoxy-D-ribulose 5-phosphate</text>
        <dbReference type="Rhea" id="RHEA:21540"/>
        <dbReference type="ChEBI" id="CHEBI:18277"/>
        <dbReference type="ChEBI" id="CHEBI:58613"/>
        <dbReference type="EC" id="5.3.1.24"/>
    </reaction>
</comment>
<comment type="pathway">
    <text evidence="1">Amino-acid biosynthesis; L-tryptophan biosynthesis; L-tryptophan from chorismate: step 3/5.</text>
</comment>
<comment type="similarity">
    <text evidence="1">Belongs to the TrpF family.</text>
</comment>
<accession>C3MB98</accession>
<proteinExistence type="inferred from homology"/>
<organism>
    <name type="scientific">Sinorhizobium fredii (strain NBRC 101917 / NGR234)</name>
    <dbReference type="NCBI Taxonomy" id="394"/>
    <lineage>
        <taxon>Bacteria</taxon>
        <taxon>Pseudomonadati</taxon>
        <taxon>Pseudomonadota</taxon>
        <taxon>Alphaproteobacteria</taxon>
        <taxon>Hyphomicrobiales</taxon>
        <taxon>Rhizobiaceae</taxon>
        <taxon>Sinorhizobium/Ensifer group</taxon>
        <taxon>Sinorhizobium</taxon>
    </lineage>
</organism>